<comment type="function">
    <text evidence="1">Catalyzes the reversible interconversion of serine and glycine with tetrahydrofolate (THF) serving as the one-carbon carrier. This reaction serves as the major source of one-carbon groups required for the biosynthesis of purines, thymidylate, methionine, and other important biomolecules. Also exhibits THF-independent aldolase activity toward beta-hydroxyamino acids, producing glycine and aldehydes, via a retro-aldol mechanism.</text>
</comment>
<comment type="catalytic activity">
    <reaction evidence="1">
        <text>(6R)-5,10-methylene-5,6,7,8-tetrahydrofolate + glycine + H2O = (6S)-5,6,7,8-tetrahydrofolate + L-serine</text>
        <dbReference type="Rhea" id="RHEA:15481"/>
        <dbReference type="ChEBI" id="CHEBI:15377"/>
        <dbReference type="ChEBI" id="CHEBI:15636"/>
        <dbReference type="ChEBI" id="CHEBI:33384"/>
        <dbReference type="ChEBI" id="CHEBI:57305"/>
        <dbReference type="ChEBI" id="CHEBI:57453"/>
        <dbReference type="EC" id="2.1.2.1"/>
    </reaction>
</comment>
<comment type="cofactor">
    <cofactor evidence="1">
        <name>pyridoxal 5'-phosphate</name>
        <dbReference type="ChEBI" id="CHEBI:597326"/>
    </cofactor>
</comment>
<comment type="pathway">
    <text evidence="1">One-carbon metabolism; tetrahydrofolate interconversion.</text>
</comment>
<comment type="pathway">
    <text evidence="1">Amino-acid biosynthesis; glycine biosynthesis; glycine from L-serine: step 1/1.</text>
</comment>
<comment type="subunit">
    <text evidence="1">Homodimer.</text>
</comment>
<comment type="subcellular location">
    <subcellularLocation>
        <location evidence="1">Cytoplasm</location>
    </subcellularLocation>
</comment>
<comment type="similarity">
    <text evidence="1">Belongs to the SHMT family.</text>
</comment>
<organism>
    <name type="scientific">Pseudomonas syringae pv. syringae (strain B728a)</name>
    <dbReference type="NCBI Taxonomy" id="205918"/>
    <lineage>
        <taxon>Bacteria</taxon>
        <taxon>Pseudomonadati</taxon>
        <taxon>Pseudomonadota</taxon>
        <taxon>Gammaproteobacteria</taxon>
        <taxon>Pseudomonadales</taxon>
        <taxon>Pseudomonadaceae</taxon>
        <taxon>Pseudomonas</taxon>
        <taxon>Pseudomonas syringae</taxon>
    </lineage>
</organism>
<evidence type="ECO:0000255" key="1">
    <source>
        <dbReference type="HAMAP-Rule" id="MF_00051"/>
    </source>
</evidence>
<reference key="1">
    <citation type="journal article" date="2005" name="Proc. Natl. Acad. Sci. U.S.A.">
        <title>Comparison of the complete genome sequences of Pseudomonas syringae pv. syringae B728a and pv. tomato DC3000.</title>
        <authorList>
            <person name="Feil H."/>
            <person name="Feil W.S."/>
            <person name="Chain P."/>
            <person name="Larimer F."/>
            <person name="Dibartolo G."/>
            <person name="Copeland A."/>
            <person name="Lykidis A."/>
            <person name="Trong S."/>
            <person name="Nolan M."/>
            <person name="Goltsman E."/>
            <person name="Thiel J."/>
            <person name="Malfatti S."/>
            <person name="Loper J.E."/>
            <person name="Lapidus A."/>
            <person name="Detter J.C."/>
            <person name="Land M."/>
            <person name="Richardson P.M."/>
            <person name="Kyrpides N.C."/>
            <person name="Ivanova N."/>
            <person name="Lindow S.E."/>
        </authorList>
    </citation>
    <scope>NUCLEOTIDE SEQUENCE [LARGE SCALE GENOMIC DNA]</scope>
    <source>
        <strain>B728a</strain>
    </source>
</reference>
<feature type="chain" id="PRO_0000235009" description="Serine hydroxymethyltransferase 1">
    <location>
        <begin position="1"/>
        <end position="417"/>
    </location>
</feature>
<feature type="binding site" evidence="1">
    <location>
        <position position="121"/>
    </location>
    <ligand>
        <name>(6S)-5,6,7,8-tetrahydrofolate</name>
        <dbReference type="ChEBI" id="CHEBI:57453"/>
    </ligand>
</feature>
<feature type="binding site" evidence="1">
    <location>
        <begin position="125"/>
        <end position="127"/>
    </location>
    <ligand>
        <name>(6S)-5,6,7,8-tetrahydrofolate</name>
        <dbReference type="ChEBI" id="CHEBI:57453"/>
    </ligand>
</feature>
<feature type="binding site" evidence="1">
    <location>
        <begin position="354"/>
        <end position="356"/>
    </location>
    <ligand>
        <name>(6S)-5,6,7,8-tetrahydrofolate</name>
        <dbReference type="ChEBI" id="CHEBI:57453"/>
    </ligand>
</feature>
<feature type="site" description="Plays an important role in substrate specificity" evidence="1">
    <location>
        <position position="228"/>
    </location>
</feature>
<feature type="modified residue" description="N6-(pyridoxal phosphate)lysine" evidence="1">
    <location>
        <position position="229"/>
    </location>
</feature>
<sequence length="417" mass="44858">MFSRDLTIAKYDADLFAAMEQEALRQEEHIELIASENYTSPAVMEAQGSALTNKYAEGYPGKRYYGGCEYVDIIEQLAIDRAKELFGADYANVQPHAGSQANSAVYLALLQGGDTILGMSLAHGGHLTHGASVSSSGKLYNAVQYGIDANGMIDYDEVERLAVEHKPKMIVAGFSAYSQILDFPRFRAIADKVGAYLFVDMAHVAGLVAAGVYPNPVPFADVVTTTTHKTLRGPRGGLILARANAEIEKKLNSAVFPGSQGGPLEHVIAAKAVCFKEALQPEFKTYQQQVVKNAKAMAGVFIERGFDVVSGGTENHLFLLSLIKQDISGKDADAALGRAFITVNKNSVPNDPRSPFVTSGLRFGTPAVTTRGFKEAECKELAGWICDILADLNNEAVIDAVREKVKAICAKLPVYGA</sequence>
<name>GLYA1_PSEU2</name>
<dbReference type="EC" id="2.1.2.1" evidence="1"/>
<dbReference type="EMBL" id="CP000075">
    <property type="protein sequence ID" value="AAY39300.1"/>
    <property type="molecule type" value="Genomic_DNA"/>
</dbReference>
<dbReference type="RefSeq" id="YP_237338.1">
    <property type="nucleotide sequence ID" value="NC_007005.1"/>
</dbReference>
<dbReference type="SMR" id="Q4ZNH2"/>
<dbReference type="STRING" id="205918.Psyr_4270"/>
<dbReference type="KEGG" id="psb:Psyr_4270"/>
<dbReference type="PATRIC" id="fig|205918.7.peg.4406"/>
<dbReference type="eggNOG" id="COG0112">
    <property type="taxonomic scope" value="Bacteria"/>
</dbReference>
<dbReference type="HOGENOM" id="CLU_022477_2_1_6"/>
<dbReference type="OrthoDB" id="9803846at2"/>
<dbReference type="UniPathway" id="UPA00193"/>
<dbReference type="UniPathway" id="UPA00288">
    <property type="reaction ID" value="UER01023"/>
</dbReference>
<dbReference type="Proteomes" id="UP000000426">
    <property type="component" value="Chromosome"/>
</dbReference>
<dbReference type="GO" id="GO:0005829">
    <property type="term" value="C:cytosol"/>
    <property type="evidence" value="ECO:0007669"/>
    <property type="project" value="TreeGrafter"/>
</dbReference>
<dbReference type="GO" id="GO:0004372">
    <property type="term" value="F:glycine hydroxymethyltransferase activity"/>
    <property type="evidence" value="ECO:0007669"/>
    <property type="project" value="UniProtKB-UniRule"/>
</dbReference>
<dbReference type="GO" id="GO:0030170">
    <property type="term" value="F:pyridoxal phosphate binding"/>
    <property type="evidence" value="ECO:0007669"/>
    <property type="project" value="UniProtKB-UniRule"/>
</dbReference>
<dbReference type="GO" id="GO:0019264">
    <property type="term" value="P:glycine biosynthetic process from serine"/>
    <property type="evidence" value="ECO:0007669"/>
    <property type="project" value="UniProtKB-UniRule"/>
</dbReference>
<dbReference type="GO" id="GO:0035999">
    <property type="term" value="P:tetrahydrofolate interconversion"/>
    <property type="evidence" value="ECO:0007669"/>
    <property type="project" value="UniProtKB-UniRule"/>
</dbReference>
<dbReference type="CDD" id="cd00378">
    <property type="entry name" value="SHMT"/>
    <property type="match status" value="1"/>
</dbReference>
<dbReference type="FunFam" id="3.40.640.10:FF:000001">
    <property type="entry name" value="Serine hydroxymethyltransferase"/>
    <property type="match status" value="1"/>
</dbReference>
<dbReference type="FunFam" id="3.90.1150.10:FF:000003">
    <property type="entry name" value="Serine hydroxymethyltransferase"/>
    <property type="match status" value="1"/>
</dbReference>
<dbReference type="Gene3D" id="3.90.1150.10">
    <property type="entry name" value="Aspartate Aminotransferase, domain 1"/>
    <property type="match status" value="1"/>
</dbReference>
<dbReference type="Gene3D" id="3.40.640.10">
    <property type="entry name" value="Type I PLP-dependent aspartate aminotransferase-like (Major domain)"/>
    <property type="match status" value="1"/>
</dbReference>
<dbReference type="HAMAP" id="MF_00051">
    <property type="entry name" value="SHMT"/>
    <property type="match status" value="1"/>
</dbReference>
<dbReference type="InterPro" id="IPR015424">
    <property type="entry name" value="PyrdxlP-dep_Trfase"/>
</dbReference>
<dbReference type="InterPro" id="IPR015421">
    <property type="entry name" value="PyrdxlP-dep_Trfase_major"/>
</dbReference>
<dbReference type="InterPro" id="IPR015422">
    <property type="entry name" value="PyrdxlP-dep_Trfase_small"/>
</dbReference>
<dbReference type="InterPro" id="IPR001085">
    <property type="entry name" value="Ser_HO-MeTrfase"/>
</dbReference>
<dbReference type="InterPro" id="IPR049943">
    <property type="entry name" value="Ser_HO-MeTrfase-like"/>
</dbReference>
<dbReference type="InterPro" id="IPR019798">
    <property type="entry name" value="Ser_HO-MeTrfase_PLP_BS"/>
</dbReference>
<dbReference type="InterPro" id="IPR039429">
    <property type="entry name" value="SHMT-like_dom"/>
</dbReference>
<dbReference type="NCBIfam" id="NF000586">
    <property type="entry name" value="PRK00011.1"/>
    <property type="match status" value="1"/>
</dbReference>
<dbReference type="PANTHER" id="PTHR11680">
    <property type="entry name" value="SERINE HYDROXYMETHYLTRANSFERASE"/>
    <property type="match status" value="1"/>
</dbReference>
<dbReference type="PANTHER" id="PTHR11680:SF50">
    <property type="entry name" value="SERINE HYDROXYMETHYLTRANSFERASE"/>
    <property type="match status" value="1"/>
</dbReference>
<dbReference type="Pfam" id="PF00464">
    <property type="entry name" value="SHMT"/>
    <property type="match status" value="1"/>
</dbReference>
<dbReference type="PIRSF" id="PIRSF000412">
    <property type="entry name" value="SHMT"/>
    <property type="match status" value="1"/>
</dbReference>
<dbReference type="SUPFAM" id="SSF53383">
    <property type="entry name" value="PLP-dependent transferases"/>
    <property type="match status" value="1"/>
</dbReference>
<dbReference type="PROSITE" id="PS00096">
    <property type="entry name" value="SHMT"/>
    <property type="match status" value="1"/>
</dbReference>
<gene>
    <name evidence="1" type="primary">glyA1</name>
    <name type="ordered locus">Psyr_4270</name>
</gene>
<keyword id="KW-0028">Amino-acid biosynthesis</keyword>
<keyword id="KW-0963">Cytoplasm</keyword>
<keyword id="KW-0554">One-carbon metabolism</keyword>
<keyword id="KW-0663">Pyridoxal phosphate</keyword>
<keyword id="KW-0808">Transferase</keyword>
<protein>
    <recommendedName>
        <fullName evidence="1">Serine hydroxymethyltransferase 1</fullName>
        <shortName evidence="1">SHMT 1</shortName>
        <shortName evidence="1">Serine methylase 1</shortName>
        <ecNumber evidence="1">2.1.2.1</ecNumber>
    </recommendedName>
</protein>
<proteinExistence type="inferred from homology"/>
<accession>Q4ZNH2</accession>